<name>AZOR1_JANSC</name>
<organism>
    <name type="scientific">Jannaschia sp. (strain CCS1)</name>
    <dbReference type="NCBI Taxonomy" id="290400"/>
    <lineage>
        <taxon>Bacteria</taxon>
        <taxon>Pseudomonadati</taxon>
        <taxon>Pseudomonadota</taxon>
        <taxon>Alphaproteobacteria</taxon>
        <taxon>Rhodobacterales</taxon>
        <taxon>Roseobacteraceae</taxon>
        <taxon>Jannaschia</taxon>
    </lineage>
</organism>
<accession>Q28UD5</accession>
<proteinExistence type="inferred from homology"/>
<protein>
    <recommendedName>
        <fullName evidence="1">FMN-dependent NADH:quinone oxidoreductase 1</fullName>
        <ecNumber evidence="1">1.6.5.-</ecNumber>
    </recommendedName>
    <alternativeName>
        <fullName evidence="1">Azo-dye reductase 1</fullName>
    </alternativeName>
    <alternativeName>
        <fullName evidence="1">FMN-dependent NADH-azo compound oxidoreductase 1</fullName>
    </alternativeName>
    <alternativeName>
        <fullName evidence="1">FMN-dependent NADH-azoreductase 1</fullName>
        <ecNumber evidence="1">1.7.1.17</ecNumber>
    </alternativeName>
</protein>
<sequence>MTHILRIDASARRDGSVSRDLTTQIVDLLGGEVTIRDLTTAIPQLDEAWIGANFTPADQRTAQQQETLSLSDTLVAEVQAADTLVIGLPIYNFGVPAALKAWVDQIARAGVTFQYTETGPKGLLEGKRAIVAVASGGTEAGSDIDFATGYMRHVLGFIGITDVTFVTADRLMVDPDAAHKTAQTQIEALAA</sequence>
<reference key="1">
    <citation type="submission" date="2006-02" db="EMBL/GenBank/DDBJ databases">
        <title>Complete sequence of chromosome of Jannaschia sp. CCS1.</title>
        <authorList>
            <consortium name="US DOE Joint Genome Institute"/>
            <person name="Copeland A."/>
            <person name="Lucas S."/>
            <person name="Lapidus A."/>
            <person name="Barry K."/>
            <person name="Detter J.C."/>
            <person name="Glavina del Rio T."/>
            <person name="Hammon N."/>
            <person name="Israni S."/>
            <person name="Pitluck S."/>
            <person name="Brettin T."/>
            <person name="Bruce D."/>
            <person name="Han C."/>
            <person name="Tapia R."/>
            <person name="Gilna P."/>
            <person name="Chertkov O."/>
            <person name="Saunders E."/>
            <person name="Schmutz J."/>
            <person name="Larimer F."/>
            <person name="Land M."/>
            <person name="Kyrpides N."/>
            <person name="Lykidis A."/>
            <person name="Moran M.A."/>
            <person name="Belas R."/>
            <person name="Ye W."/>
            <person name="Buchan A."/>
            <person name="Gonzalez J.M."/>
            <person name="Schell M.A."/>
            <person name="Richardson P."/>
        </authorList>
    </citation>
    <scope>NUCLEOTIDE SEQUENCE [LARGE SCALE GENOMIC DNA]</scope>
    <source>
        <strain>CCS1</strain>
    </source>
</reference>
<dbReference type="EC" id="1.6.5.-" evidence="1"/>
<dbReference type="EC" id="1.7.1.17" evidence="1"/>
<dbReference type="EMBL" id="CP000264">
    <property type="protein sequence ID" value="ABD53677.1"/>
    <property type="molecule type" value="Genomic_DNA"/>
</dbReference>
<dbReference type="RefSeq" id="WP_011453885.1">
    <property type="nucleotide sequence ID" value="NC_007802.1"/>
</dbReference>
<dbReference type="SMR" id="Q28UD5"/>
<dbReference type="STRING" id="290400.Jann_0760"/>
<dbReference type="KEGG" id="jan:Jann_0760"/>
<dbReference type="eggNOG" id="COG1182">
    <property type="taxonomic scope" value="Bacteria"/>
</dbReference>
<dbReference type="HOGENOM" id="CLU_088964_0_0_5"/>
<dbReference type="OrthoDB" id="9787136at2"/>
<dbReference type="Proteomes" id="UP000008326">
    <property type="component" value="Chromosome"/>
</dbReference>
<dbReference type="GO" id="GO:0009055">
    <property type="term" value="F:electron transfer activity"/>
    <property type="evidence" value="ECO:0007669"/>
    <property type="project" value="UniProtKB-UniRule"/>
</dbReference>
<dbReference type="GO" id="GO:0010181">
    <property type="term" value="F:FMN binding"/>
    <property type="evidence" value="ECO:0007669"/>
    <property type="project" value="UniProtKB-UniRule"/>
</dbReference>
<dbReference type="GO" id="GO:0016652">
    <property type="term" value="F:oxidoreductase activity, acting on NAD(P)H as acceptor"/>
    <property type="evidence" value="ECO:0007669"/>
    <property type="project" value="UniProtKB-UniRule"/>
</dbReference>
<dbReference type="GO" id="GO:0016655">
    <property type="term" value="F:oxidoreductase activity, acting on NAD(P)H, quinone or similar compound as acceptor"/>
    <property type="evidence" value="ECO:0007669"/>
    <property type="project" value="InterPro"/>
</dbReference>
<dbReference type="Gene3D" id="3.40.50.360">
    <property type="match status" value="1"/>
</dbReference>
<dbReference type="HAMAP" id="MF_01216">
    <property type="entry name" value="Azoreductase_type1"/>
    <property type="match status" value="1"/>
</dbReference>
<dbReference type="InterPro" id="IPR003680">
    <property type="entry name" value="Flavodoxin_fold"/>
</dbReference>
<dbReference type="InterPro" id="IPR029039">
    <property type="entry name" value="Flavoprotein-like_sf"/>
</dbReference>
<dbReference type="InterPro" id="IPR050104">
    <property type="entry name" value="FMN-dep_NADH:Q_OxRdtase_AzoR1"/>
</dbReference>
<dbReference type="InterPro" id="IPR023048">
    <property type="entry name" value="NADH:quinone_OxRdtase_FMN_depd"/>
</dbReference>
<dbReference type="PANTHER" id="PTHR43741">
    <property type="entry name" value="FMN-DEPENDENT NADH-AZOREDUCTASE 1"/>
    <property type="match status" value="1"/>
</dbReference>
<dbReference type="PANTHER" id="PTHR43741:SF2">
    <property type="entry name" value="FMN-DEPENDENT NADH:QUINONE OXIDOREDUCTASE"/>
    <property type="match status" value="1"/>
</dbReference>
<dbReference type="Pfam" id="PF02525">
    <property type="entry name" value="Flavodoxin_2"/>
    <property type="match status" value="1"/>
</dbReference>
<dbReference type="SUPFAM" id="SSF52218">
    <property type="entry name" value="Flavoproteins"/>
    <property type="match status" value="1"/>
</dbReference>
<comment type="function">
    <text evidence="1">Quinone reductase that provides resistance to thiol-specific stress caused by electrophilic quinones.</text>
</comment>
<comment type="function">
    <text evidence="1">Also exhibits azoreductase activity. Catalyzes the reductive cleavage of the azo bond in aromatic azo compounds to the corresponding amines.</text>
</comment>
<comment type="catalytic activity">
    <reaction evidence="1">
        <text>2 a quinone + NADH + H(+) = 2 a 1,4-benzosemiquinone + NAD(+)</text>
        <dbReference type="Rhea" id="RHEA:65952"/>
        <dbReference type="ChEBI" id="CHEBI:15378"/>
        <dbReference type="ChEBI" id="CHEBI:57540"/>
        <dbReference type="ChEBI" id="CHEBI:57945"/>
        <dbReference type="ChEBI" id="CHEBI:132124"/>
        <dbReference type="ChEBI" id="CHEBI:134225"/>
    </reaction>
</comment>
<comment type="catalytic activity">
    <reaction evidence="1">
        <text>N,N-dimethyl-1,4-phenylenediamine + anthranilate + 2 NAD(+) = 2-(4-dimethylaminophenyl)diazenylbenzoate + 2 NADH + 2 H(+)</text>
        <dbReference type="Rhea" id="RHEA:55872"/>
        <dbReference type="ChEBI" id="CHEBI:15378"/>
        <dbReference type="ChEBI" id="CHEBI:15783"/>
        <dbReference type="ChEBI" id="CHEBI:16567"/>
        <dbReference type="ChEBI" id="CHEBI:57540"/>
        <dbReference type="ChEBI" id="CHEBI:57945"/>
        <dbReference type="ChEBI" id="CHEBI:71579"/>
        <dbReference type="EC" id="1.7.1.17"/>
    </reaction>
</comment>
<comment type="cofactor">
    <cofactor evidence="1">
        <name>FMN</name>
        <dbReference type="ChEBI" id="CHEBI:58210"/>
    </cofactor>
    <text evidence="1">Binds 1 FMN per subunit.</text>
</comment>
<comment type="subunit">
    <text evidence="1">Homodimer.</text>
</comment>
<comment type="similarity">
    <text evidence="1">Belongs to the azoreductase type 1 family.</text>
</comment>
<gene>
    <name evidence="1" type="primary">azoR1</name>
    <name type="ordered locus">Jann_0760</name>
</gene>
<keyword id="KW-0285">Flavoprotein</keyword>
<keyword id="KW-0288">FMN</keyword>
<keyword id="KW-0520">NAD</keyword>
<keyword id="KW-0560">Oxidoreductase</keyword>
<keyword id="KW-1185">Reference proteome</keyword>
<evidence type="ECO:0000255" key="1">
    <source>
        <dbReference type="HAMAP-Rule" id="MF_01216"/>
    </source>
</evidence>
<feature type="chain" id="PRO_0000245925" description="FMN-dependent NADH:quinone oxidoreductase 1">
    <location>
        <begin position="1"/>
        <end position="191"/>
    </location>
</feature>
<feature type="binding site" evidence="1">
    <location>
        <position position="10"/>
    </location>
    <ligand>
        <name>FMN</name>
        <dbReference type="ChEBI" id="CHEBI:58210"/>
    </ligand>
</feature>
<feature type="binding site" evidence="1">
    <location>
        <begin position="16"/>
        <end position="18"/>
    </location>
    <ligand>
        <name>FMN</name>
        <dbReference type="ChEBI" id="CHEBI:58210"/>
    </ligand>
</feature>